<accession>P86178</accession>
<feature type="chain" id="PRO_0000366203" description="L-rhamnose-binding lectin CSL2">
    <location>
        <begin position="1"/>
        <end position="195"/>
    </location>
</feature>
<feature type="domain" description="SUEL-type lectin 1" evidence="1">
    <location>
        <begin position="1"/>
        <end position="97"/>
    </location>
</feature>
<feature type="domain" description="SUEL-type lectin 2" evidence="1">
    <location>
        <begin position="104"/>
        <end position="195"/>
    </location>
</feature>
<keyword id="KW-0903">Direct protein sequencing</keyword>
<keyword id="KW-0348">Hemagglutinin</keyword>
<keyword id="KW-0430">Lectin</keyword>
<keyword id="KW-0677">Repeat</keyword>
<organism>
    <name type="scientific">Oncorhynchus keta</name>
    <name type="common">Chum salmon</name>
    <name type="synonym">Salmo keta</name>
    <dbReference type="NCBI Taxonomy" id="8018"/>
    <lineage>
        <taxon>Eukaryota</taxon>
        <taxon>Metazoa</taxon>
        <taxon>Chordata</taxon>
        <taxon>Craniata</taxon>
        <taxon>Vertebrata</taxon>
        <taxon>Euteleostomi</taxon>
        <taxon>Actinopterygii</taxon>
        <taxon>Neopterygii</taxon>
        <taxon>Teleostei</taxon>
        <taxon>Protacanthopterygii</taxon>
        <taxon>Salmoniformes</taxon>
        <taxon>Salmonidae</taxon>
        <taxon>Salmoninae</taxon>
        <taxon>Oncorhynchus</taxon>
    </lineage>
</organism>
<reference evidence="4" key="1">
    <citation type="journal article" date="2002" name="Fish. Sci.">
        <title>Isolation and characterization of L-rhamnose-binding lectins from chum salmon (Oncorhynchus keta) eggs.</title>
        <authorList>
            <person name="Shiina N."/>
            <person name="Tateno H."/>
            <person name="Ogawa T."/>
            <person name="Muramoto K."/>
            <person name="Saneyoshi M."/>
            <person name="Kamiya H."/>
        </authorList>
    </citation>
    <scope>PROTEIN SEQUENCE</scope>
    <scope>FUNCTION</scope>
    <scope>BIOPHYSICOCHEMICAL PROPERTIES</scope>
    <source>
        <tissue evidence="2">Egg</tissue>
    </source>
</reference>
<sequence length="195" mass="21364">TRVVTCDNGENVQFLICDSGVIFIERALYGRTDGTTCKEGRPANQLTNTQCSQTGTLEVLSHRCNGKQVCEVNTEVFRTSDPCVGIYKYLETTYTCLPATRSITCEGSDAPLECDEGTIQIHSANYGRRDQLVCSFNRPANQLANTNCLSQSITTSKSAERCNRKSQCDVPASNSLYGDPCVGTYKYLDVAYTCG</sequence>
<dbReference type="SMR" id="P86178"/>
<dbReference type="GO" id="GO:0060473">
    <property type="term" value="C:cortical granule"/>
    <property type="evidence" value="ECO:0000250"/>
    <property type="project" value="AgBase"/>
</dbReference>
<dbReference type="GO" id="GO:0005534">
    <property type="term" value="F:galactose binding"/>
    <property type="evidence" value="ECO:0000250"/>
    <property type="project" value="AgBase"/>
</dbReference>
<dbReference type="GO" id="GO:1903777">
    <property type="term" value="F:melibiose binding"/>
    <property type="evidence" value="ECO:0000250"/>
    <property type="project" value="AgBase"/>
</dbReference>
<dbReference type="GO" id="GO:0042803">
    <property type="term" value="F:protein homodimerization activity"/>
    <property type="evidence" value="ECO:0000250"/>
    <property type="project" value="AgBase"/>
</dbReference>
<dbReference type="GO" id="GO:0033296">
    <property type="term" value="F:rhamnose binding"/>
    <property type="evidence" value="ECO:0000250"/>
    <property type="project" value="AgBase"/>
</dbReference>
<dbReference type="CDD" id="cd22833">
    <property type="entry name" value="Gal_Rha_Lectin_CSL1-2_RBL_SML_rpt1"/>
    <property type="match status" value="1"/>
</dbReference>
<dbReference type="CDD" id="cd22832">
    <property type="entry name" value="Gal_Rha_Lectin_CSL3_rpt1_rpt2-like"/>
    <property type="match status" value="1"/>
</dbReference>
<dbReference type="FunFam" id="2.60.120.740:FF:000003">
    <property type="entry name" value="Protein eva-1 homolog C"/>
    <property type="match status" value="2"/>
</dbReference>
<dbReference type="Gene3D" id="2.60.120.740">
    <property type="match status" value="2"/>
</dbReference>
<dbReference type="InterPro" id="IPR000922">
    <property type="entry name" value="Lectin_gal-bd_dom"/>
</dbReference>
<dbReference type="InterPro" id="IPR043159">
    <property type="entry name" value="Lectin_gal-bd_sf"/>
</dbReference>
<dbReference type="PANTHER" id="PTHR46780">
    <property type="entry name" value="PROTEIN EVA-1"/>
    <property type="match status" value="1"/>
</dbReference>
<dbReference type="Pfam" id="PF02140">
    <property type="entry name" value="SUEL_Lectin"/>
    <property type="match status" value="2"/>
</dbReference>
<dbReference type="PROSITE" id="PS50228">
    <property type="entry name" value="SUEL_LECTIN"/>
    <property type="match status" value="2"/>
</dbReference>
<evidence type="ECO:0000255" key="1">
    <source>
        <dbReference type="PROSITE-ProRule" id="PRU00260"/>
    </source>
</evidence>
<evidence type="ECO:0000269" key="2">
    <source ref="1"/>
</evidence>
<evidence type="ECO:0000303" key="3">
    <source ref="1"/>
</evidence>
<evidence type="ECO:0000305" key="4"/>
<proteinExistence type="evidence at protein level"/>
<comment type="function">
    <text evidence="2">L-rhamnose binding lectin. Has hemagglutinating activity towards rabbit erythrocytes and human type B erythrocytes. Hemagglutinating activity is inhibited by smooth-type lipopolysaccharide (LPS) from S.flexneri 1A and E.coli K12, but not by rough-type LPS from S.flexneri, E.coli K12 and E.coli EH100. Agglutinates E.coli K12 and B.subtilis.</text>
</comment>
<comment type="biophysicochemical properties">
    <temperatureDependence>
        <text evidence="2">Loses half of its hemagglutinating activity after heating at 50 degrees Celsius for 120 minutes. Activity is abolished by heating at 80 degrees Celsius for 60 minutes.</text>
    </temperatureDependence>
</comment>
<name>CSL2_ONCKE</name>
<protein>
    <recommendedName>
        <fullName evidence="3">L-rhamnose-binding lectin CSL2</fullName>
    </recommendedName>
</protein>